<protein>
    <recommendedName>
        <fullName evidence="1">Small, acid-soluble spore protein O</fullName>
        <shortName evidence="1">SASP O</shortName>
    </recommendedName>
</protein>
<comment type="subcellular location">
    <subcellularLocation>
        <location evidence="1">Spore core</location>
    </subcellularLocation>
</comment>
<comment type="induction">
    <text evidence="1">Expressed only in the forespore compartment of sporulating cells.</text>
</comment>
<comment type="similarity">
    <text evidence="1">Belongs to the SspO family.</text>
</comment>
<name>SSPO_BACC3</name>
<organism>
    <name type="scientific">Bacillus cereus (strain 03BB102)</name>
    <dbReference type="NCBI Taxonomy" id="572264"/>
    <lineage>
        <taxon>Bacteria</taxon>
        <taxon>Bacillati</taxon>
        <taxon>Bacillota</taxon>
        <taxon>Bacilli</taxon>
        <taxon>Bacillales</taxon>
        <taxon>Bacillaceae</taxon>
        <taxon>Bacillus</taxon>
        <taxon>Bacillus cereus group</taxon>
    </lineage>
</organism>
<keyword id="KW-0749">Sporulation</keyword>
<reference key="1">
    <citation type="submission" date="2009-02" db="EMBL/GenBank/DDBJ databases">
        <title>Genome sequence of Bacillus cereus 03BB102.</title>
        <authorList>
            <person name="Dodson R.J."/>
            <person name="Jackson P."/>
            <person name="Munk A.C."/>
            <person name="Brettin T."/>
            <person name="Bruce D."/>
            <person name="Detter C."/>
            <person name="Tapia R."/>
            <person name="Han C."/>
            <person name="Sutton G."/>
            <person name="Sims D."/>
        </authorList>
    </citation>
    <scope>NUCLEOTIDE SEQUENCE [LARGE SCALE GENOMIC DNA]</scope>
    <source>
        <strain>03BB102</strain>
    </source>
</reference>
<proteinExistence type="inferred from homology"/>
<sequence>MGKRKANHTISGMNAASAQGQGAGYNEEFANENLTPAERQNNKKRKKNQ</sequence>
<feature type="chain" id="PRO_1000147651" description="Small, acid-soluble spore protein O">
    <location>
        <begin position="1"/>
        <end position="49"/>
    </location>
</feature>
<feature type="region of interest" description="Disordered" evidence="2">
    <location>
        <begin position="1"/>
        <end position="49"/>
    </location>
</feature>
<feature type="compositionally biased region" description="Polar residues" evidence="2">
    <location>
        <begin position="8"/>
        <end position="20"/>
    </location>
</feature>
<dbReference type="EMBL" id="CP001407">
    <property type="protein sequence ID" value="ACO27706.1"/>
    <property type="molecule type" value="Genomic_DNA"/>
</dbReference>
<dbReference type="RefSeq" id="WP_000518052.1">
    <property type="nucleotide sequence ID" value="NZ_CP009318.1"/>
</dbReference>
<dbReference type="GeneID" id="93007567"/>
<dbReference type="KEGG" id="bcx:BCA_3710"/>
<dbReference type="PATRIC" id="fig|572264.18.peg.3671"/>
<dbReference type="Proteomes" id="UP000002210">
    <property type="component" value="Chromosome"/>
</dbReference>
<dbReference type="GO" id="GO:0042601">
    <property type="term" value="C:endospore-forming forespore"/>
    <property type="evidence" value="ECO:0007669"/>
    <property type="project" value="InterPro"/>
</dbReference>
<dbReference type="GO" id="GO:0030436">
    <property type="term" value="P:asexual sporulation"/>
    <property type="evidence" value="ECO:0007669"/>
    <property type="project" value="UniProtKB-UniRule"/>
</dbReference>
<dbReference type="GO" id="GO:0030435">
    <property type="term" value="P:sporulation resulting in formation of a cellular spore"/>
    <property type="evidence" value="ECO:0007669"/>
    <property type="project" value="UniProtKB-KW"/>
</dbReference>
<dbReference type="HAMAP" id="MF_00665">
    <property type="entry name" value="SspO"/>
    <property type="match status" value="1"/>
</dbReference>
<dbReference type="InterPro" id="IPR012613">
    <property type="entry name" value="SASP_SspO"/>
</dbReference>
<dbReference type="NCBIfam" id="TIGR02864">
    <property type="entry name" value="spore_sspO"/>
    <property type="match status" value="1"/>
</dbReference>
<dbReference type="Pfam" id="PF08175">
    <property type="entry name" value="SspO"/>
    <property type="match status" value="1"/>
</dbReference>
<accession>C1EN57</accession>
<gene>
    <name evidence="1" type="primary">sspO</name>
    <name type="ordered locus">BCA_3710</name>
</gene>
<evidence type="ECO:0000255" key="1">
    <source>
        <dbReference type="HAMAP-Rule" id="MF_00665"/>
    </source>
</evidence>
<evidence type="ECO:0000256" key="2">
    <source>
        <dbReference type="SAM" id="MobiDB-lite"/>
    </source>
</evidence>